<gene>
    <name evidence="1" type="primary">hisC</name>
    <name type="ordered locus">Rcas_0200</name>
</gene>
<sequence>MPASITGLLRPDIAALEPYTPIVPLETLAERLGLPVERIIKLDANENPYGPSPRALAALAAVEHDAPHRYAIYPDPDHTRLRAALSRYVGQPPERIICGAGSDELIDLIMRAVLRPGDVMVDCPPTFAMYSFDAALYGARIVAVPRTEQFDVDVEGVAEAVERDGAKLLFLAAPNNPTGTPLARTTVERLLDLPIILAIDEAYAEFAGTSVIDLVGTRPNLVVLRTFSKWAGLAGLRIGYAAMHEDVITYLWKIKQPYNVNVAAEVAAVASLDDLDERLSTVARIVAERERLAAALAALPGIHVYPSAANFLLCRMTSGGAARARAIRDTLAQRGILIRYFNRPGIDDCIRISVGRPEQNDALLDVLKEVA</sequence>
<name>HIS8_ROSCS</name>
<organism>
    <name type="scientific">Roseiflexus castenholzii (strain DSM 13941 / HLO8)</name>
    <dbReference type="NCBI Taxonomy" id="383372"/>
    <lineage>
        <taxon>Bacteria</taxon>
        <taxon>Bacillati</taxon>
        <taxon>Chloroflexota</taxon>
        <taxon>Chloroflexia</taxon>
        <taxon>Chloroflexales</taxon>
        <taxon>Roseiflexineae</taxon>
        <taxon>Roseiflexaceae</taxon>
        <taxon>Roseiflexus</taxon>
    </lineage>
</organism>
<evidence type="ECO:0000255" key="1">
    <source>
        <dbReference type="HAMAP-Rule" id="MF_01023"/>
    </source>
</evidence>
<dbReference type="EC" id="2.6.1.9" evidence="1"/>
<dbReference type="EMBL" id="CP000804">
    <property type="protein sequence ID" value="ABU56333.1"/>
    <property type="molecule type" value="Genomic_DNA"/>
</dbReference>
<dbReference type="RefSeq" id="WP_011997738.1">
    <property type="nucleotide sequence ID" value="NC_009767.1"/>
</dbReference>
<dbReference type="SMR" id="A7NFV2"/>
<dbReference type="STRING" id="383372.Rcas_0200"/>
<dbReference type="KEGG" id="rca:Rcas_0200"/>
<dbReference type="eggNOG" id="COG0079">
    <property type="taxonomic scope" value="Bacteria"/>
</dbReference>
<dbReference type="HOGENOM" id="CLU_017584_3_1_0"/>
<dbReference type="OrthoDB" id="9813612at2"/>
<dbReference type="UniPathway" id="UPA00031">
    <property type="reaction ID" value="UER00012"/>
</dbReference>
<dbReference type="Proteomes" id="UP000000263">
    <property type="component" value="Chromosome"/>
</dbReference>
<dbReference type="GO" id="GO:0004400">
    <property type="term" value="F:histidinol-phosphate transaminase activity"/>
    <property type="evidence" value="ECO:0007669"/>
    <property type="project" value="UniProtKB-UniRule"/>
</dbReference>
<dbReference type="GO" id="GO:0030170">
    <property type="term" value="F:pyridoxal phosphate binding"/>
    <property type="evidence" value="ECO:0007669"/>
    <property type="project" value="InterPro"/>
</dbReference>
<dbReference type="GO" id="GO:0000105">
    <property type="term" value="P:L-histidine biosynthetic process"/>
    <property type="evidence" value="ECO:0007669"/>
    <property type="project" value="UniProtKB-UniRule"/>
</dbReference>
<dbReference type="CDD" id="cd00609">
    <property type="entry name" value="AAT_like"/>
    <property type="match status" value="1"/>
</dbReference>
<dbReference type="Gene3D" id="3.90.1150.10">
    <property type="entry name" value="Aspartate Aminotransferase, domain 1"/>
    <property type="match status" value="1"/>
</dbReference>
<dbReference type="Gene3D" id="3.40.640.10">
    <property type="entry name" value="Type I PLP-dependent aspartate aminotransferase-like (Major domain)"/>
    <property type="match status" value="1"/>
</dbReference>
<dbReference type="HAMAP" id="MF_01023">
    <property type="entry name" value="HisC_aminotrans_2"/>
    <property type="match status" value="1"/>
</dbReference>
<dbReference type="InterPro" id="IPR004839">
    <property type="entry name" value="Aminotransferase_I/II_large"/>
</dbReference>
<dbReference type="InterPro" id="IPR005861">
    <property type="entry name" value="HisP_aminotrans"/>
</dbReference>
<dbReference type="InterPro" id="IPR015424">
    <property type="entry name" value="PyrdxlP-dep_Trfase"/>
</dbReference>
<dbReference type="InterPro" id="IPR015421">
    <property type="entry name" value="PyrdxlP-dep_Trfase_major"/>
</dbReference>
<dbReference type="InterPro" id="IPR015422">
    <property type="entry name" value="PyrdxlP-dep_Trfase_small"/>
</dbReference>
<dbReference type="NCBIfam" id="TIGR01141">
    <property type="entry name" value="hisC"/>
    <property type="match status" value="1"/>
</dbReference>
<dbReference type="PANTHER" id="PTHR42885:SF2">
    <property type="entry name" value="HISTIDINOL-PHOSPHATE AMINOTRANSFERASE"/>
    <property type="match status" value="1"/>
</dbReference>
<dbReference type="PANTHER" id="PTHR42885">
    <property type="entry name" value="HISTIDINOL-PHOSPHATE AMINOTRANSFERASE-RELATED"/>
    <property type="match status" value="1"/>
</dbReference>
<dbReference type="Pfam" id="PF00155">
    <property type="entry name" value="Aminotran_1_2"/>
    <property type="match status" value="1"/>
</dbReference>
<dbReference type="SUPFAM" id="SSF53383">
    <property type="entry name" value="PLP-dependent transferases"/>
    <property type="match status" value="1"/>
</dbReference>
<feature type="chain" id="PRO_1000084200" description="Histidinol-phosphate aminotransferase">
    <location>
        <begin position="1"/>
        <end position="371"/>
    </location>
</feature>
<feature type="modified residue" description="N6-(pyridoxal phosphate)lysine" evidence="1">
    <location>
        <position position="229"/>
    </location>
</feature>
<keyword id="KW-0028">Amino-acid biosynthesis</keyword>
<keyword id="KW-0032">Aminotransferase</keyword>
<keyword id="KW-0368">Histidine biosynthesis</keyword>
<keyword id="KW-0663">Pyridoxal phosphate</keyword>
<keyword id="KW-1185">Reference proteome</keyword>
<keyword id="KW-0808">Transferase</keyword>
<accession>A7NFV2</accession>
<reference key="1">
    <citation type="submission" date="2007-08" db="EMBL/GenBank/DDBJ databases">
        <title>Complete sequence of Roseiflexus castenholzii DSM 13941.</title>
        <authorList>
            <consortium name="US DOE Joint Genome Institute"/>
            <person name="Copeland A."/>
            <person name="Lucas S."/>
            <person name="Lapidus A."/>
            <person name="Barry K."/>
            <person name="Glavina del Rio T."/>
            <person name="Dalin E."/>
            <person name="Tice H."/>
            <person name="Pitluck S."/>
            <person name="Thompson L.S."/>
            <person name="Brettin T."/>
            <person name="Bruce D."/>
            <person name="Detter J.C."/>
            <person name="Han C."/>
            <person name="Tapia R."/>
            <person name="Schmutz J."/>
            <person name="Larimer F."/>
            <person name="Land M."/>
            <person name="Hauser L."/>
            <person name="Kyrpides N."/>
            <person name="Mikhailova N."/>
            <person name="Bryant D.A."/>
            <person name="Hanada S."/>
            <person name="Tsukatani Y."/>
            <person name="Richardson P."/>
        </authorList>
    </citation>
    <scope>NUCLEOTIDE SEQUENCE [LARGE SCALE GENOMIC DNA]</scope>
    <source>
        <strain>DSM 13941 / HLO8</strain>
    </source>
</reference>
<proteinExistence type="inferred from homology"/>
<comment type="catalytic activity">
    <reaction evidence="1">
        <text>L-histidinol phosphate + 2-oxoglutarate = 3-(imidazol-4-yl)-2-oxopropyl phosphate + L-glutamate</text>
        <dbReference type="Rhea" id="RHEA:23744"/>
        <dbReference type="ChEBI" id="CHEBI:16810"/>
        <dbReference type="ChEBI" id="CHEBI:29985"/>
        <dbReference type="ChEBI" id="CHEBI:57766"/>
        <dbReference type="ChEBI" id="CHEBI:57980"/>
        <dbReference type="EC" id="2.6.1.9"/>
    </reaction>
</comment>
<comment type="cofactor">
    <cofactor evidence="1">
        <name>pyridoxal 5'-phosphate</name>
        <dbReference type="ChEBI" id="CHEBI:597326"/>
    </cofactor>
</comment>
<comment type="pathway">
    <text evidence="1">Amino-acid biosynthesis; L-histidine biosynthesis; L-histidine from 5-phospho-alpha-D-ribose 1-diphosphate: step 7/9.</text>
</comment>
<comment type="subunit">
    <text evidence="1">Homodimer.</text>
</comment>
<comment type="similarity">
    <text evidence="1">Belongs to the class-II pyridoxal-phosphate-dependent aminotransferase family. Histidinol-phosphate aminotransferase subfamily.</text>
</comment>
<protein>
    <recommendedName>
        <fullName evidence="1">Histidinol-phosphate aminotransferase</fullName>
        <ecNumber evidence="1">2.6.1.9</ecNumber>
    </recommendedName>
    <alternativeName>
        <fullName evidence="1">Imidazole acetol-phosphate transaminase</fullName>
    </alternativeName>
</protein>